<keyword id="KW-0119">Carbohydrate metabolism</keyword>
<keyword id="KW-0963">Cytoplasm</keyword>
<keyword id="KW-0413">Isomerase</keyword>
<keyword id="KW-0460">Magnesium</keyword>
<keyword id="KW-0479">Metal-binding</keyword>
<keyword id="KW-0859">Xylose metabolism</keyword>
<dbReference type="EC" id="5.3.1.5" evidence="1"/>
<dbReference type="EMBL" id="CR626927">
    <property type="protein sequence ID" value="CAH08054.1"/>
    <property type="molecule type" value="Genomic_DNA"/>
</dbReference>
<dbReference type="RefSeq" id="WP_010992983.1">
    <property type="nucleotide sequence ID" value="NC_003228.3"/>
</dbReference>
<dbReference type="SMR" id="Q5LCV9"/>
<dbReference type="PaxDb" id="272559-BF9343_2273"/>
<dbReference type="GeneID" id="60370223"/>
<dbReference type="KEGG" id="bfs:BF9343_2273"/>
<dbReference type="eggNOG" id="COG2115">
    <property type="taxonomic scope" value="Bacteria"/>
</dbReference>
<dbReference type="HOGENOM" id="CLU_037261_1_0_10"/>
<dbReference type="BioCyc" id="BFRA272559:G1GHZ-2467-MONOMER"/>
<dbReference type="Proteomes" id="UP000006731">
    <property type="component" value="Chromosome"/>
</dbReference>
<dbReference type="GO" id="GO:0005737">
    <property type="term" value="C:cytoplasm"/>
    <property type="evidence" value="ECO:0007669"/>
    <property type="project" value="UniProtKB-SubCell"/>
</dbReference>
<dbReference type="GO" id="GO:0000287">
    <property type="term" value="F:magnesium ion binding"/>
    <property type="evidence" value="ECO:0007669"/>
    <property type="project" value="UniProtKB-UniRule"/>
</dbReference>
<dbReference type="GO" id="GO:0009045">
    <property type="term" value="F:xylose isomerase activity"/>
    <property type="evidence" value="ECO:0007669"/>
    <property type="project" value="UniProtKB-UniRule"/>
</dbReference>
<dbReference type="GO" id="GO:0042732">
    <property type="term" value="P:D-xylose metabolic process"/>
    <property type="evidence" value="ECO:0007669"/>
    <property type="project" value="UniProtKB-UniRule"/>
</dbReference>
<dbReference type="FunFam" id="3.20.20.150:FF:000002">
    <property type="entry name" value="Xylose isomerase"/>
    <property type="match status" value="1"/>
</dbReference>
<dbReference type="Gene3D" id="3.20.20.150">
    <property type="entry name" value="Divalent-metal-dependent TIM barrel enzymes"/>
    <property type="match status" value="1"/>
</dbReference>
<dbReference type="HAMAP" id="MF_00455">
    <property type="entry name" value="Xylose_isom_A"/>
    <property type="match status" value="1"/>
</dbReference>
<dbReference type="InterPro" id="IPR036237">
    <property type="entry name" value="Xyl_isomerase-like_sf"/>
</dbReference>
<dbReference type="InterPro" id="IPR013022">
    <property type="entry name" value="Xyl_isomerase-like_TIM-brl"/>
</dbReference>
<dbReference type="InterPro" id="IPR013452">
    <property type="entry name" value="Xylose_isom_bac"/>
</dbReference>
<dbReference type="InterPro" id="IPR001998">
    <property type="entry name" value="Xylose_isomerase"/>
</dbReference>
<dbReference type="NCBIfam" id="NF003998">
    <property type="entry name" value="PRK05474.1"/>
    <property type="match status" value="1"/>
</dbReference>
<dbReference type="NCBIfam" id="TIGR02630">
    <property type="entry name" value="xylose_isom_A"/>
    <property type="match status" value="1"/>
</dbReference>
<dbReference type="PANTHER" id="PTHR48408">
    <property type="match status" value="1"/>
</dbReference>
<dbReference type="PANTHER" id="PTHR48408:SF1">
    <property type="entry name" value="XYLOSE ISOMERASE"/>
    <property type="match status" value="1"/>
</dbReference>
<dbReference type="Pfam" id="PF01261">
    <property type="entry name" value="AP_endonuc_2"/>
    <property type="match status" value="1"/>
</dbReference>
<dbReference type="PRINTS" id="PR00688">
    <property type="entry name" value="XYLOSISMRASE"/>
</dbReference>
<dbReference type="SUPFAM" id="SSF51658">
    <property type="entry name" value="Xylose isomerase-like"/>
    <property type="match status" value="1"/>
</dbReference>
<dbReference type="PROSITE" id="PS51415">
    <property type="entry name" value="XYLOSE_ISOMERASE"/>
    <property type="match status" value="1"/>
</dbReference>
<feature type="chain" id="PRO_0000236957" description="Xylose isomerase">
    <location>
        <begin position="1"/>
        <end position="439"/>
    </location>
</feature>
<feature type="active site" evidence="1">
    <location>
        <position position="103"/>
    </location>
</feature>
<feature type="active site" evidence="1">
    <location>
        <position position="106"/>
    </location>
</feature>
<feature type="binding site" evidence="1">
    <location>
        <position position="234"/>
    </location>
    <ligand>
        <name>Mg(2+)</name>
        <dbReference type="ChEBI" id="CHEBI:18420"/>
        <label>1</label>
    </ligand>
</feature>
<feature type="binding site" evidence="1">
    <location>
        <position position="270"/>
    </location>
    <ligand>
        <name>Mg(2+)</name>
        <dbReference type="ChEBI" id="CHEBI:18420"/>
        <label>1</label>
    </ligand>
</feature>
<feature type="binding site" evidence="1">
    <location>
        <position position="270"/>
    </location>
    <ligand>
        <name>Mg(2+)</name>
        <dbReference type="ChEBI" id="CHEBI:18420"/>
        <label>2</label>
    </ligand>
</feature>
<feature type="binding site" evidence="1">
    <location>
        <position position="273"/>
    </location>
    <ligand>
        <name>Mg(2+)</name>
        <dbReference type="ChEBI" id="CHEBI:18420"/>
        <label>2</label>
    </ligand>
</feature>
<feature type="binding site" evidence="1">
    <location>
        <position position="298"/>
    </location>
    <ligand>
        <name>Mg(2+)</name>
        <dbReference type="ChEBI" id="CHEBI:18420"/>
        <label>1</label>
    </ligand>
</feature>
<feature type="binding site" evidence="1">
    <location>
        <position position="309"/>
    </location>
    <ligand>
        <name>Mg(2+)</name>
        <dbReference type="ChEBI" id="CHEBI:18420"/>
        <label>2</label>
    </ligand>
</feature>
<feature type="binding site" evidence="1">
    <location>
        <position position="311"/>
    </location>
    <ligand>
        <name>Mg(2+)</name>
        <dbReference type="ChEBI" id="CHEBI:18420"/>
        <label>2</label>
    </ligand>
</feature>
<feature type="binding site" evidence="1">
    <location>
        <position position="341"/>
    </location>
    <ligand>
        <name>Mg(2+)</name>
        <dbReference type="ChEBI" id="CHEBI:18420"/>
        <label>1</label>
    </ligand>
</feature>
<comment type="catalytic activity">
    <reaction evidence="1">
        <text>alpha-D-xylose = alpha-D-xylulofuranose</text>
        <dbReference type="Rhea" id="RHEA:22816"/>
        <dbReference type="ChEBI" id="CHEBI:28518"/>
        <dbReference type="ChEBI" id="CHEBI:188998"/>
        <dbReference type="EC" id="5.3.1.5"/>
    </reaction>
</comment>
<comment type="cofactor">
    <cofactor evidence="1">
        <name>Mg(2+)</name>
        <dbReference type="ChEBI" id="CHEBI:18420"/>
    </cofactor>
    <text evidence="1">Binds 2 magnesium ions per subunit.</text>
</comment>
<comment type="subunit">
    <text evidence="1">Homotetramer.</text>
</comment>
<comment type="subcellular location">
    <subcellularLocation>
        <location evidence="1">Cytoplasm</location>
    </subcellularLocation>
</comment>
<comment type="similarity">
    <text evidence="1">Belongs to the xylose isomerase family.</text>
</comment>
<gene>
    <name evidence="1" type="primary">xylA</name>
    <name type="ordered locus">BF2356</name>
</gene>
<evidence type="ECO:0000255" key="1">
    <source>
        <dbReference type="HAMAP-Rule" id="MF_00455"/>
    </source>
</evidence>
<organism>
    <name type="scientific">Bacteroides fragilis (strain ATCC 25285 / DSM 2151 / CCUG 4856 / JCM 11019 / LMG 10263 / NCTC 9343 / Onslow / VPI 2553 / EN-2)</name>
    <dbReference type="NCBI Taxonomy" id="272559"/>
    <lineage>
        <taxon>Bacteria</taxon>
        <taxon>Pseudomonadati</taxon>
        <taxon>Bacteroidota</taxon>
        <taxon>Bacteroidia</taxon>
        <taxon>Bacteroidales</taxon>
        <taxon>Bacteroidaceae</taxon>
        <taxon>Bacteroides</taxon>
    </lineage>
</organism>
<proteinExistence type="inferred from homology"/>
<protein>
    <recommendedName>
        <fullName evidence="1">Xylose isomerase</fullName>
        <ecNumber evidence="1">5.3.1.5</ecNumber>
    </recommendedName>
</protein>
<name>XYLA_BACFN</name>
<accession>Q5LCV9</accession>
<reference key="1">
    <citation type="journal article" date="2005" name="Science">
        <title>Extensive DNA inversions in the B. fragilis genome control variable gene expression.</title>
        <authorList>
            <person name="Cerdeno-Tarraga A.-M."/>
            <person name="Patrick S."/>
            <person name="Crossman L.C."/>
            <person name="Blakely G."/>
            <person name="Abratt V."/>
            <person name="Lennard N."/>
            <person name="Poxton I."/>
            <person name="Duerden B."/>
            <person name="Harris B."/>
            <person name="Quail M.A."/>
            <person name="Barron A."/>
            <person name="Clark L."/>
            <person name="Corton C."/>
            <person name="Doggett J."/>
            <person name="Holden M.T.G."/>
            <person name="Larke N."/>
            <person name="Line A."/>
            <person name="Lord A."/>
            <person name="Norbertczak H."/>
            <person name="Ormond D."/>
            <person name="Price C."/>
            <person name="Rabbinowitsch E."/>
            <person name="Woodward J."/>
            <person name="Barrell B.G."/>
            <person name="Parkhill J."/>
        </authorList>
    </citation>
    <scope>NUCLEOTIDE SEQUENCE [LARGE SCALE GENOMIC DNA]</scope>
    <source>
        <strain>ATCC 25285 / DSM 2151 / CCUG 4856 / JCM 11019 / LMG 10263 / NCTC 9343 / Onslow / VPI 2553 / EN-2</strain>
    </source>
</reference>
<sequence>MATKEYFPGIGKIKFEGKDSKNPMAFRYYDAEKMINGRSMKDWLKFAMAWWHTLCAEGGDQFGGGTKQFPWNGDPDPVQAAKNKMDAGFEFMQKMGIGYYCFHDVDLVTEADSIEAYEANLKELVAYAKQKQAETGIKLLWGTANVFSHARYMNGAATNPDFDVVARAAVQIKNAIDATIELGGTNYVFWGGREGYMSLLNTDQKREKEHLAQMLTIARDYGRARGFKGTFLIEPKPMEPTKHQYDVDTETVIGFLKAHGLNQDFKVNIEVNHATLAGHTFEHELAVAVDNGMLGSIDANRGDYQNGWDTDQFPIDNFELTQAMMQIIRNDGLGNGGTNFDAKTRRNSTDPEDIFIAHIAGMDAMARALESAANLLNESPYQKMLSDRYASFDAGKGKEFEEGKLSLEELVAYAKANGEPKQTSGQQELYEALVNIYSL</sequence>